<sequence length="268" mass="28324">MRRIAVVGAAGRMGKNLIEAVQQTGGAAGLTAAVDRPDSTLVGADAGELAGLGRIGVPLSGDLGKVCEEFDVLIDFTHPSVTLKNIEQCRKARRAMVIGTTGFSADEKLLLAEAAKDIPIVFAANFSVGVNLCLKLLDTAARVLGDEVDIEIIEAHHRHKVDAPSGTALRMGEVVAQALGRDLQEVAVYGREGQTGARARETIGFATVRAGDVVGDHTVLFAAEGERVEITHKASSRMTFARGAVRAALWLEGKENGLYDMQDVLGLR</sequence>
<name>DAPB_PSEA8</name>
<proteinExistence type="inferred from homology"/>
<feature type="chain" id="PRO_1000117375" description="4-hydroxy-tetrahydrodipicolinate reductase">
    <location>
        <begin position="1"/>
        <end position="268"/>
    </location>
</feature>
<feature type="active site" description="Proton donor/acceptor" evidence="1">
    <location>
        <position position="156"/>
    </location>
</feature>
<feature type="active site" description="Proton donor" evidence="1">
    <location>
        <position position="160"/>
    </location>
</feature>
<feature type="binding site" evidence="1">
    <location>
        <begin position="8"/>
        <end position="13"/>
    </location>
    <ligand>
        <name>NAD(+)</name>
        <dbReference type="ChEBI" id="CHEBI:57540"/>
    </ligand>
</feature>
<feature type="binding site" evidence="1">
    <location>
        <position position="35"/>
    </location>
    <ligand>
        <name>NAD(+)</name>
        <dbReference type="ChEBI" id="CHEBI:57540"/>
    </ligand>
</feature>
<feature type="binding site" evidence="1">
    <location>
        <position position="36"/>
    </location>
    <ligand>
        <name>NADP(+)</name>
        <dbReference type="ChEBI" id="CHEBI:58349"/>
    </ligand>
</feature>
<feature type="binding site" evidence="1">
    <location>
        <begin position="99"/>
        <end position="101"/>
    </location>
    <ligand>
        <name>NAD(+)</name>
        <dbReference type="ChEBI" id="CHEBI:57540"/>
    </ligand>
</feature>
<feature type="binding site" evidence="1">
    <location>
        <begin position="123"/>
        <end position="126"/>
    </location>
    <ligand>
        <name>NAD(+)</name>
        <dbReference type="ChEBI" id="CHEBI:57540"/>
    </ligand>
</feature>
<feature type="binding site" evidence="1">
    <location>
        <position position="157"/>
    </location>
    <ligand>
        <name>(S)-2,3,4,5-tetrahydrodipicolinate</name>
        <dbReference type="ChEBI" id="CHEBI:16845"/>
    </ligand>
</feature>
<feature type="binding site" evidence="1">
    <location>
        <begin position="166"/>
        <end position="167"/>
    </location>
    <ligand>
        <name>(S)-2,3,4,5-tetrahydrodipicolinate</name>
        <dbReference type="ChEBI" id="CHEBI:16845"/>
    </ligand>
</feature>
<protein>
    <recommendedName>
        <fullName evidence="1">4-hydroxy-tetrahydrodipicolinate reductase</fullName>
        <shortName evidence="1">HTPA reductase</shortName>
        <ecNumber evidence="1">1.17.1.8</ecNumber>
    </recommendedName>
</protein>
<accession>B7V1H1</accession>
<evidence type="ECO:0000255" key="1">
    <source>
        <dbReference type="HAMAP-Rule" id="MF_00102"/>
    </source>
</evidence>
<evidence type="ECO:0000305" key="2"/>
<gene>
    <name evidence="1" type="primary">dapB</name>
    <name type="ordered locus">PLES_51441</name>
</gene>
<reference key="1">
    <citation type="journal article" date="2009" name="Genome Res.">
        <title>Newly introduced genomic prophage islands are critical determinants of in vivo competitiveness in the Liverpool epidemic strain of Pseudomonas aeruginosa.</title>
        <authorList>
            <person name="Winstanley C."/>
            <person name="Langille M.G.I."/>
            <person name="Fothergill J.L."/>
            <person name="Kukavica-Ibrulj I."/>
            <person name="Paradis-Bleau C."/>
            <person name="Sanschagrin F."/>
            <person name="Thomson N.R."/>
            <person name="Winsor G.L."/>
            <person name="Quail M.A."/>
            <person name="Lennard N."/>
            <person name="Bignell A."/>
            <person name="Clarke L."/>
            <person name="Seeger K."/>
            <person name="Saunders D."/>
            <person name="Harris D."/>
            <person name="Parkhill J."/>
            <person name="Hancock R.E.W."/>
            <person name="Brinkman F.S.L."/>
            <person name="Levesque R.C."/>
        </authorList>
    </citation>
    <scope>NUCLEOTIDE SEQUENCE [LARGE SCALE GENOMIC DNA]</scope>
    <source>
        <strain>LESB58</strain>
    </source>
</reference>
<comment type="function">
    <text evidence="1">Catalyzes the conversion of 4-hydroxy-tetrahydrodipicolinate (HTPA) to tetrahydrodipicolinate.</text>
</comment>
<comment type="catalytic activity">
    <reaction evidence="1">
        <text>(S)-2,3,4,5-tetrahydrodipicolinate + NAD(+) + H2O = (2S,4S)-4-hydroxy-2,3,4,5-tetrahydrodipicolinate + NADH + H(+)</text>
        <dbReference type="Rhea" id="RHEA:35323"/>
        <dbReference type="ChEBI" id="CHEBI:15377"/>
        <dbReference type="ChEBI" id="CHEBI:15378"/>
        <dbReference type="ChEBI" id="CHEBI:16845"/>
        <dbReference type="ChEBI" id="CHEBI:57540"/>
        <dbReference type="ChEBI" id="CHEBI:57945"/>
        <dbReference type="ChEBI" id="CHEBI:67139"/>
        <dbReference type="EC" id="1.17.1.8"/>
    </reaction>
</comment>
<comment type="catalytic activity">
    <reaction evidence="1">
        <text>(S)-2,3,4,5-tetrahydrodipicolinate + NADP(+) + H2O = (2S,4S)-4-hydroxy-2,3,4,5-tetrahydrodipicolinate + NADPH + H(+)</text>
        <dbReference type="Rhea" id="RHEA:35331"/>
        <dbReference type="ChEBI" id="CHEBI:15377"/>
        <dbReference type="ChEBI" id="CHEBI:15378"/>
        <dbReference type="ChEBI" id="CHEBI:16845"/>
        <dbReference type="ChEBI" id="CHEBI:57783"/>
        <dbReference type="ChEBI" id="CHEBI:58349"/>
        <dbReference type="ChEBI" id="CHEBI:67139"/>
        <dbReference type="EC" id="1.17.1.8"/>
    </reaction>
</comment>
<comment type="pathway">
    <text evidence="1">Amino-acid biosynthesis; L-lysine biosynthesis via DAP pathway; (S)-tetrahydrodipicolinate from L-aspartate: step 4/4.</text>
</comment>
<comment type="subcellular location">
    <subcellularLocation>
        <location evidence="1">Cytoplasm</location>
    </subcellularLocation>
</comment>
<comment type="similarity">
    <text evidence="1">Belongs to the DapB family.</text>
</comment>
<comment type="caution">
    <text evidence="2">Was originally thought to be a dihydrodipicolinate reductase (DHDPR), catalyzing the conversion of dihydrodipicolinate to tetrahydrodipicolinate. However, it was shown in E.coli that the substrate of the enzymatic reaction is not dihydrodipicolinate (DHDP) but in fact (2S,4S)-4-hydroxy-2,3,4,5-tetrahydrodipicolinic acid (HTPA), the product released by the DapA-catalyzed reaction.</text>
</comment>
<keyword id="KW-0028">Amino-acid biosynthesis</keyword>
<keyword id="KW-0963">Cytoplasm</keyword>
<keyword id="KW-0220">Diaminopimelate biosynthesis</keyword>
<keyword id="KW-0457">Lysine biosynthesis</keyword>
<keyword id="KW-0520">NAD</keyword>
<keyword id="KW-0521">NADP</keyword>
<keyword id="KW-0560">Oxidoreductase</keyword>
<dbReference type="EC" id="1.17.1.8" evidence="1"/>
<dbReference type="EMBL" id="FM209186">
    <property type="protein sequence ID" value="CAW29898.1"/>
    <property type="molecule type" value="Genomic_DNA"/>
</dbReference>
<dbReference type="RefSeq" id="WP_003095210.1">
    <property type="nucleotide sequence ID" value="NC_011770.1"/>
</dbReference>
<dbReference type="SMR" id="B7V1H1"/>
<dbReference type="KEGG" id="pag:PLES_51441"/>
<dbReference type="HOGENOM" id="CLU_047479_2_1_6"/>
<dbReference type="UniPathway" id="UPA00034">
    <property type="reaction ID" value="UER00018"/>
</dbReference>
<dbReference type="GO" id="GO:0005829">
    <property type="term" value="C:cytosol"/>
    <property type="evidence" value="ECO:0007669"/>
    <property type="project" value="TreeGrafter"/>
</dbReference>
<dbReference type="GO" id="GO:0008839">
    <property type="term" value="F:4-hydroxy-tetrahydrodipicolinate reductase"/>
    <property type="evidence" value="ECO:0007669"/>
    <property type="project" value="UniProtKB-EC"/>
</dbReference>
<dbReference type="GO" id="GO:0051287">
    <property type="term" value="F:NAD binding"/>
    <property type="evidence" value="ECO:0007669"/>
    <property type="project" value="UniProtKB-UniRule"/>
</dbReference>
<dbReference type="GO" id="GO:0050661">
    <property type="term" value="F:NADP binding"/>
    <property type="evidence" value="ECO:0007669"/>
    <property type="project" value="UniProtKB-UniRule"/>
</dbReference>
<dbReference type="GO" id="GO:0016726">
    <property type="term" value="F:oxidoreductase activity, acting on CH or CH2 groups, NAD or NADP as acceptor"/>
    <property type="evidence" value="ECO:0007669"/>
    <property type="project" value="UniProtKB-UniRule"/>
</dbReference>
<dbReference type="GO" id="GO:0019877">
    <property type="term" value="P:diaminopimelate biosynthetic process"/>
    <property type="evidence" value="ECO:0007669"/>
    <property type="project" value="UniProtKB-UniRule"/>
</dbReference>
<dbReference type="GO" id="GO:0009089">
    <property type="term" value="P:lysine biosynthetic process via diaminopimelate"/>
    <property type="evidence" value="ECO:0007669"/>
    <property type="project" value="UniProtKB-UniRule"/>
</dbReference>
<dbReference type="CDD" id="cd02274">
    <property type="entry name" value="DHDPR_N"/>
    <property type="match status" value="1"/>
</dbReference>
<dbReference type="FunFam" id="3.30.360.10:FF:000004">
    <property type="entry name" value="4-hydroxy-tetrahydrodipicolinate reductase"/>
    <property type="match status" value="1"/>
</dbReference>
<dbReference type="FunFam" id="3.40.50.720:FF:000048">
    <property type="entry name" value="4-hydroxy-tetrahydrodipicolinate reductase"/>
    <property type="match status" value="1"/>
</dbReference>
<dbReference type="Gene3D" id="3.30.360.10">
    <property type="entry name" value="Dihydrodipicolinate Reductase, domain 2"/>
    <property type="match status" value="1"/>
</dbReference>
<dbReference type="Gene3D" id="3.40.50.720">
    <property type="entry name" value="NAD(P)-binding Rossmann-like Domain"/>
    <property type="match status" value="1"/>
</dbReference>
<dbReference type="HAMAP" id="MF_00102">
    <property type="entry name" value="DapB"/>
    <property type="match status" value="1"/>
</dbReference>
<dbReference type="InterPro" id="IPR022663">
    <property type="entry name" value="DapB_C"/>
</dbReference>
<dbReference type="InterPro" id="IPR000846">
    <property type="entry name" value="DapB_N"/>
</dbReference>
<dbReference type="InterPro" id="IPR022664">
    <property type="entry name" value="DapB_N_CS"/>
</dbReference>
<dbReference type="InterPro" id="IPR023940">
    <property type="entry name" value="DHDPR_bac"/>
</dbReference>
<dbReference type="InterPro" id="IPR036291">
    <property type="entry name" value="NAD(P)-bd_dom_sf"/>
</dbReference>
<dbReference type="NCBIfam" id="TIGR00036">
    <property type="entry name" value="dapB"/>
    <property type="match status" value="1"/>
</dbReference>
<dbReference type="PANTHER" id="PTHR20836:SF0">
    <property type="entry name" value="4-HYDROXY-TETRAHYDRODIPICOLINATE REDUCTASE 1, CHLOROPLASTIC-RELATED"/>
    <property type="match status" value="1"/>
</dbReference>
<dbReference type="PANTHER" id="PTHR20836">
    <property type="entry name" value="DIHYDRODIPICOLINATE REDUCTASE"/>
    <property type="match status" value="1"/>
</dbReference>
<dbReference type="Pfam" id="PF05173">
    <property type="entry name" value="DapB_C"/>
    <property type="match status" value="1"/>
</dbReference>
<dbReference type="Pfam" id="PF01113">
    <property type="entry name" value="DapB_N"/>
    <property type="match status" value="1"/>
</dbReference>
<dbReference type="PIRSF" id="PIRSF000161">
    <property type="entry name" value="DHPR"/>
    <property type="match status" value="1"/>
</dbReference>
<dbReference type="SUPFAM" id="SSF55347">
    <property type="entry name" value="Glyceraldehyde-3-phosphate dehydrogenase-like, C-terminal domain"/>
    <property type="match status" value="1"/>
</dbReference>
<dbReference type="SUPFAM" id="SSF51735">
    <property type="entry name" value="NAD(P)-binding Rossmann-fold domains"/>
    <property type="match status" value="1"/>
</dbReference>
<dbReference type="PROSITE" id="PS01298">
    <property type="entry name" value="DAPB"/>
    <property type="match status" value="1"/>
</dbReference>
<organism>
    <name type="scientific">Pseudomonas aeruginosa (strain LESB58)</name>
    <dbReference type="NCBI Taxonomy" id="557722"/>
    <lineage>
        <taxon>Bacteria</taxon>
        <taxon>Pseudomonadati</taxon>
        <taxon>Pseudomonadota</taxon>
        <taxon>Gammaproteobacteria</taxon>
        <taxon>Pseudomonadales</taxon>
        <taxon>Pseudomonadaceae</taxon>
        <taxon>Pseudomonas</taxon>
    </lineage>
</organism>